<proteinExistence type="evidence at protein level"/>
<organism evidence="2">
    <name type="scientific">Amycolatopsis orientalis</name>
    <name type="common">Nocardia orientalis</name>
    <dbReference type="NCBI Taxonomy" id="31958"/>
    <lineage>
        <taxon>Bacteria</taxon>
        <taxon>Bacillati</taxon>
        <taxon>Actinomycetota</taxon>
        <taxon>Actinomycetes</taxon>
        <taxon>Pseudonocardiales</taxon>
        <taxon>Pseudonocardiaceae</taxon>
        <taxon>Amycolatopsis</taxon>
    </lineage>
</organism>
<accession>Q8RN04</accession>
<reference evidence="1" key="1">
    <citation type="journal article" date="2002" name="J. Biol. Chem.">
        <title>Crystal structure of OxyB, a cytochrome P450 implicated in an oxidative phenol coupling reaction during vancomycin biosynthesis.</title>
        <authorList>
            <person name="Zerbe K."/>
            <person name="Pylypenko O."/>
            <person name="Vitali F."/>
            <person name="Zhang W."/>
            <person name="Rousett S."/>
            <person name="Heck M."/>
            <person name="Vrijbloed J.W."/>
            <person name="Bischoff D."/>
            <person name="Bister B."/>
            <person name="Suessmuth R.D."/>
            <person name="Pelzer S."/>
            <person name="Wohlleben W."/>
            <person name="Robinson J.A."/>
            <person name="Schlichting I."/>
        </authorList>
    </citation>
    <scope>NUCLEOTIDE SEQUENCE [GENOMIC DNA]</scope>
    <scope>X-RAY CRYSTALLOGRAPHY (1.7 ANGSTROMS)</scope>
</reference>
<evidence type="ECO:0000305" key="1"/>
<evidence type="ECO:0000312" key="2">
    <source>
        <dbReference type="EMBL" id="AAL90878.1"/>
    </source>
</evidence>
<evidence type="ECO:0007829" key="3">
    <source>
        <dbReference type="PDB" id="1LFK"/>
    </source>
</evidence>
<evidence type="ECO:0007829" key="4">
    <source>
        <dbReference type="PDB" id="1LG9"/>
    </source>
</evidence>
<keyword id="KW-0002">3D-structure</keyword>
<keyword id="KW-0349">Heme</keyword>
<keyword id="KW-0408">Iron</keyword>
<keyword id="KW-0479">Metal-binding</keyword>
<keyword id="KW-0503">Monooxygenase</keyword>
<keyword id="KW-0560">Oxidoreductase</keyword>
<dbReference type="EC" id="1.14.-.-"/>
<dbReference type="EMBL" id="AF486630">
    <property type="protein sequence ID" value="AAL90878.1"/>
    <property type="molecule type" value="Genomic_DNA"/>
</dbReference>
<dbReference type="PDB" id="1LFK">
    <property type="method" value="X-ray"/>
    <property type="resolution" value="1.70 A"/>
    <property type="chains" value="A=1-398"/>
</dbReference>
<dbReference type="PDB" id="1LG9">
    <property type="method" value="X-ray"/>
    <property type="resolution" value="2.00 A"/>
    <property type="chains" value="A=1-398"/>
</dbReference>
<dbReference type="PDB" id="1LGF">
    <property type="method" value="X-ray"/>
    <property type="resolution" value="2.20 A"/>
    <property type="chains" value="A=1-398"/>
</dbReference>
<dbReference type="PDBsum" id="1LFK"/>
<dbReference type="PDBsum" id="1LG9"/>
<dbReference type="PDBsum" id="1LGF"/>
<dbReference type="SMR" id="Q8RN04"/>
<dbReference type="DIP" id="DIP-61594N"/>
<dbReference type="IntAct" id="Q8RN04">
    <property type="interactions" value="2"/>
</dbReference>
<dbReference type="STRING" id="31958.SD37_33705"/>
<dbReference type="BindingDB" id="Q8RN04"/>
<dbReference type="ChEMBL" id="CHEMBL1075039"/>
<dbReference type="eggNOG" id="COG2124">
    <property type="taxonomic scope" value="Bacteria"/>
</dbReference>
<dbReference type="UniPathway" id="UPA00162"/>
<dbReference type="EvolutionaryTrace" id="Q8RN04"/>
<dbReference type="GO" id="GO:0020037">
    <property type="term" value="F:heme binding"/>
    <property type="evidence" value="ECO:0007669"/>
    <property type="project" value="InterPro"/>
</dbReference>
<dbReference type="GO" id="GO:0005506">
    <property type="term" value="F:iron ion binding"/>
    <property type="evidence" value="ECO:0007669"/>
    <property type="project" value="InterPro"/>
</dbReference>
<dbReference type="GO" id="GO:0004497">
    <property type="term" value="F:monooxygenase activity"/>
    <property type="evidence" value="ECO:0007669"/>
    <property type="project" value="UniProtKB-KW"/>
</dbReference>
<dbReference type="GO" id="GO:0016705">
    <property type="term" value="F:oxidoreductase activity, acting on paired donors, with incorporation or reduction of molecular oxygen"/>
    <property type="evidence" value="ECO:0007669"/>
    <property type="project" value="InterPro"/>
</dbReference>
<dbReference type="GO" id="GO:0033072">
    <property type="term" value="P:vancomycin biosynthetic process"/>
    <property type="evidence" value="ECO:0007669"/>
    <property type="project" value="UniProtKB-UniPathway"/>
</dbReference>
<dbReference type="CDD" id="cd11030">
    <property type="entry name" value="CYP105-like"/>
    <property type="match status" value="1"/>
</dbReference>
<dbReference type="FunFam" id="1.10.630.10:FF:000018">
    <property type="entry name" value="Cytochrome P450 monooxygenase"/>
    <property type="match status" value="1"/>
</dbReference>
<dbReference type="Gene3D" id="1.10.630.10">
    <property type="entry name" value="Cytochrome P450"/>
    <property type="match status" value="1"/>
</dbReference>
<dbReference type="InterPro" id="IPR001128">
    <property type="entry name" value="Cyt_P450"/>
</dbReference>
<dbReference type="InterPro" id="IPR002397">
    <property type="entry name" value="Cyt_P450_B"/>
</dbReference>
<dbReference type="InterPro" id="IPR017972">
    <property type="entry name" value="Cyt_P450_CS"/>
</dbReference>
<dbReference type="InterPro" id="IPR036396">
    <property type="entry name" value="Cyt_P450_sf"/>
</dbReference>
<dbReference type="PANTHER" id="PTHR46696">
    <property type="entry name" value="P450, PUTATIVE (EUROFUNG)-RELATED"/>
    <property type="match status" value="1"/>
</dbReference>
<dbReference type="PANTHER" id="PTHR46696:SF6">
    <property type="entry name" value="P450, PUTATIVE (EUROFUNG)-RELATED"/>
    <property type="match status" value="1"/>
</dbReference>
<dbReference type="Pfam" id="PF00067">
    <property type="entry name" value="p450"/>
    <property type="match status" value="1"/>
</dbReference>
<dbReference type="PRINTS" id="PR00359">
    <property type="entry name" value="BP450"/>
</dbReference>
<dbReference type="SUPFAM" id="SSF48264">
    <property type="entry name" value="Cytochrome P450"/>
    <property type="match status" value="1"/>
</dbReference>
<dbReference type="PROSITE" id="PS00086">
    <property type="entry name" value="CYTOCHROME_P450"/>
    <property type="match status" value="1"/>
</dbReference>
<sequence>MSEDDPRPLHIRRQGLDPADELLAAGALTRVTIGSGADAETHWMATAHAVVRQVMGDHQQFSTRRRWDPRDEIGGKGIFRPRELVGNLMDYDPPEHTRLRRKLTPGFTLRKMQRMAPYIEQIVNDRLDEMERAGSPADLIAFVADKVPGAVLCELVGVPRDDRDMFMKLCHGHLDASLSQKRRAALGDKFSRYLLAMIARERKEPGEGMIGAVVAEYGDDATDEELRGFCVQVMLAGDDNISGMIGLGVLAMLRHPEQIDAFRGDEQSAQRAVDELIRYLTVPYSPTPRIAREDLTLAGQEIKKGDSVICSLPAANRDPALAPDVDRLDVTREPIPHVAFGHGVHHCLGAALARLELRTVFTELWRRFPALRLADPAQDTEFRLTTPAYGLTELMVAW</sequence>
<gene>
    <name type="primary">cyp165B3</name>
    <name type="synonym">oxyB</name>
</gene>
<comment type="function">
    <text>Involved in the coupling of aromatic side chains of the heptapeptide of vancomycin.</text>
</comment>
<comment type="cofactor">
    <cofactor>
        <name>heme</name>
        <dbReference type="ChEBI" id="CHEBI:30413"/>
    </cofactor>
</comment>
<comment type="pathway">
    <text>Antibiotic biosynthesis; vancomycin biosynthesis.</text>
</comment>
<comment type="similarity">
    <text evidence="1">Belongs to the cytochrome P450 family.</text>
</comment>
<name>C5B3_AMYOR</name>
<protein>
    <recommendedName>
        <fullName>Cytochrome P450 165B3</fullName>
        <ecNumber>1.14.-.-</ecNumber>
    </recommendedName>
    <alternativeName>
        <fullName>Vancomycin biosynthesis protein OxyB</fullName>
    </alternativeName>
</protein>
<feature type="chain" id="PRO_0000052239" description="Cytochrome P450 165B3">
    <location>
        <begin position="1"/>
        <end position="398"/>
    </location>
</feature>
<feature type="binding site" description="axial binding residue">
    <location>
        <position position="347"/>
    </location>
    <ligand>
        <name>heme</name>
        <dbReference type="ChEBI" id="CHEBI:30413"/>
    </ligand>
    <ligandPart>
        <name>Fe</name>
        <dbReference type="ChEBI" id="CHEBI:18248"/>
    </ligandPart>
</feature>
<feature type="helix" evidence="3">
    <location>
        <begin position="9"/>
        <end position="11"/>
    </location>
</feature>
<feature type="helix" evidence="3">
    <location>
        <begin position="20"/>
        <end position="23"/>
    </location>
</feature>
<feature type="strand" evidence="3">
    <location>
        <begin position="27"/>
        <end position="31"/>
    </location>
</feature>
<feature type="turn" evidence="4">
    <location>
        <begin position="36"/>
        <end position="38"/>
    </location>
</feature>
<feature type="strand" evidence="3">
    <location>
        <begin position="42"/>
        <end position="45"/>
    </location>
</feature>
<feature type="helix" evidence="3">
    <location>
        <begin position="48"/>
        <end position="56"/>
    </location>
</feature>
<feature type="turn" evidence="3">
    <location>
        <begin position="58"/>
        <end position="60"/>
    </location>
</feature>
<feature type="strand" evidence="3">
    <location>
        <begin position="61"/>
        <end position="63"/>
    </location>
</feature>
<feature type="helix" evidence="3">
    <location>
        <begin position="88"/>
        <end position="90"/>
    </location>
</feature>
<feature type="helix" evidence="3">
    <location>
        <begin position="95"/>
        <end position="103"/>
    </location>
</feature>
<feature type="helix" evidence="3">
    <location>
        <begin position="104"/>
        <end position="107"/>
    </location>
</feature>
<feature type="helix" evidence="3">
    <location>
        <begin position="109"/>
        <end position="133"/>
    </location>
</feature>
<feature type="strand" evidence="3">
    <location>
        <begin position="135"/>
        <end position="138"/>
    </location>
</feature>
<feature type="helix" evidence="3">
    <location>
        <begin position="139"/>
        <end position="142"/>
    </location>
</feature>
<feature type="turn" evidence="3">
    <location>
        <begin position="143"/>
        <end position="146"/>
    </location>
</feature>
<feature type="helix" evidence="3">
    <location>
        <begin position="147"/>
        <end position="156"/>
    </location>
</feature>
<feature type="helix" evidence="3">
    <location>
        <begin position="160"/>
        <end position="162"/>
    </location>
</feature>
<feature type="helix" evidence="3">
    <location>
        <begin position="163"/>
        <end position="172"/>
    </location>
</feature>
<feature type="helix" evidence="3">
    <location>
        <begin position="180"/>
        <end position="203"/>
    </location>
</feature>
<feature type="helix" evidence="3">
    <location>
        <begin position="209"/>
        <end position="217"/>
    </location>
</feature>
<feature type="helix" evidence="3">
    <location>
        <begin position="218"/>
        <end position="220"/>
    </location>
</feature>
<feature type="helix" evidence="3">
    <location>
        <begin position="223"/>
        <end position="236"/>
    </location>
</feature>
<feature type="helix" evidence="3">
    <location>
        <begin position="239"/>
        <end position="254"/>
    </location>
</feature>
<feature type="helix" evidence="3">
    <location>
        <begin position="256"/>
        <end position="262"/>
    </location>
</feature>
<feature type="helix" evidence="3">
    <location>
        <begin position="266"/>
        <end position="280"/>
    </location>
</feature>
<feature type="strand" evidence="3">
    <location>
        <begin position="289"/>
        <end position="293"/>
    </location>
</feature>
<feature type="strand" evidence="3">
    <location>
        <begin position="295"/>
        <end position="297"/>
    </location>
</feature>
<feature type="strand" evidence="3">
    <location>
        <begin position="300"/>
        <end position="302"/>
    </location>
</feature>
<feature type="strand" evidence="3">
    <location>
        <begin position="307"/>
        <end position="310"/>
    </location>
</feature>
<feature type="helix" evidence="3">
    <location>
        <begin position="312"/>
        <end position="315"/>
    </location>
</feature>
<feature type="turn" evidence="3">
    <location>
        <begin position="319"/>
        <end position="321"/>
    </location>
</feature>
<feature type="turn" evidence="3">
    <location>
        <begin position="323"/>
        <end position="326"/>
    </location>
</feature>
<feature type="helix" evidence="3">
    <location>
        <begin position="350"/>
        <end position="367"/>
    </location>
</feature>
<feature type="strand" evidence="3">
    <location>
        <begin position="372"/>
        <end position="375"/>
    </location>
</feature>
<feature type="strand" evidence="3">
    <location>
        <begin position="381"/>
        <end position="383"/>
    </location>
</feature>
<feature type="strand" evidence="3">
    <location>
        <begin position="385"/>
        <end position="388"/>
    </location>
</feature>
<feature type="strand" evidence="3">
    <location>
        <begin position="390"/>
        <end position="393"/>
    </location>
</feature>
<feature type="strand" evidence="3">
    <location>
        <begin position="395"/>
        <end position="397"/>
    </location>
</feature>